<accession>P94559</accession>
<dbReference type="EC" id="3.1.4.-" evidence="1"/>
<dbReference type="EMBL" id="Z75208">
    <property type="protein sequence ID" value="CAA99556.1"/>
    <property type="status" value="ALT_INIT"/>
    <property type="molecule type" value="Genomic_DNA"/>
</dbReference>
<dbReference type="EMBL" id="AL009126">
    <property type="protein sequence ID" value="CAB14795.2"/>
    <property type="molecule type" value="Genomic_DNA"/>
</dbReference>
<dbReference type="PIR" id="D69986">
    <property type="entry name" value="D69986"/>
</dbReference>
<dbReference type="RefSeq" id="NP_390713.2">
    <property type="nucleotide sequence ID" value="NC_000964.3"/>
</dbReference>
<dbReference type="RefSeq" id="WP_003229585.1">
    <property type="nucleotide sequence ID" value="NZ_OZ025638.1"/>
</dbReference>
<dbReference type="SMR" id="P94559"/>
<dbReference type="FunCoup" id="P94559">
    <property type="interactions" value="9"/>
</dbReference>
<dbReference type="STRING" id="224308.BSU28350"/>
<dbReference type="jPOST" id="P94559"/>
<dbReference type="PaxDb" id="224308-BSU28350"/>
<dbReference type="EnsemblBacteria" id="CAB14795">
    <property type="protein sequence ID" value="CAB14795"/>
    <property type="gene ID" value="BSU_28350"/>
</dbReference>
<dbReference type="GeneID" id="938021"/>
<dbReference type="KEGG" id="bsu:BSU28350"/>
<dbReference type="PATRIC" id="fig|224308.179.peg.3080"/>
<dbReference type="eggNOG" id="COG0622">
    <property type="taxonomic scope" value="Bacteria"/>
</dbReference>
<dbReference type="InParanoid" id="P94559"/>
<dbReference type="OrthoDB" id="9800565at2"/>
<dbReference type="PhylomeDB" id="P94559"/>
<dbReference type="BioCyc" id="BSUB:BSU28350-MONOMER"/>
<dbReference type="Proteomes" id="UP000001570">
    <property type="component" value="Chromosome"/>
</dbReference>
<dbReference type="GO" id="GO:0016787">
    <property type="term" value="F:hydrolase activity"/>
    <property type="evidence" value="ECO:0007669"/>
    <property type="project" value="UniProtKB-KW"/>
</dbReference>
<dbReference type="GO" id="GO:0046872">
    <property type="term" value="F:metal ion binding"/>
    <property type="evidence" value="ECO:0007669"/>
    <property type="project" value="UniProtKB-KW"/>
</dbReference>
<dbReference type="CDD" id="cd00841">
    <property type="entry name" value="MPP_YfcE"/>
    <property type="match status" value="1"/>
</dbReference>
<dbReference type="Gene3D" id="3.60.21.10">
    <property type="match status" value="1"/>
</dbReference>
<dbReference type="InterPro" id="IPR024654">
    <property type="entry name" value="Calcineurin-like_PHP_lpxH"/>
</dbReference>
<dbReference type="InterPro" id="IPR029052">
    <property type="entry name" value="Metallo-depent_PP-like"/>
</dbReference>
<dbReference type="InterPro" id="IPR041802">
    <property type="entry name" value="MPP_YfcE"/>
</dbReference>
<dbReference type="InterPro" id="IPR020935">
    <property type="entry name" value="PdiEstase_YfcE_CS"/>
</dbReference>
<dbReference type="InterPro" id="IPR000979">
    <property type="entry name" value="Phosphodiesterase_MJ0936/Vps29"/>
</dbReference>
<dbReference type="NCBIfam" id="TIGR00040">
    <property type="entry name" value="yfcE"/>
    <property type="match status" value="1"/>
</dbReference>
<dbReference type="PANTHER" id="PTHR11124">
    <property type="entry name" value="VACUOLAR SORTING PROTEIN VPS29"/>
    <property type="match status" value="1"/>
</dbReference>
<dbReference type="Pfam" id="PF12850">
    <property type="entry name" value="Metallophos_2"/>
    <property type="match status" value="1"/>
</dbReference>
<dbReference type="SUPFAM" id="SSF56300">
    <property type="entry name" value="Metallo-dependent phosphatases"/>
    <property type="match status" value="1"/>
</dbReference>
<dbReference type="PROSITE" id="PS01269">
    <property type="entry name" value="UPF0025"/>
    <property type="match status" value="1"/>
</dbReference>
<gene>
    <name type="primary">ysnB</name>
    <name type="ordered locus">BSU28350</name>
</gene>
<name>YSNB_BACSU</name>
<proteinExistence type="inferred from homology"/>
<sequence>MNVLIISDSHGLEEELQTIAKRHEAEVDLMIHCGDSELETRHPALEPYAVVKGNCDFAGDFKDELLLTAGSRKILVTHGHLHGIKQTLLNVYYRAEELGADVICFGHSHIAGSEVLRGKLMINPGSIRLPRVRRTESYAILTLENDAATVRFYDQAGNEIEDLQNRVTL</sequence>
<keyword id="KW-0378">Hydrolase</keyword>
<keyword id="KW-0464">Manganese</keyword>
<keyword id="KW-0479">Metal-binding</keyword>
<keyword id="KW-1185">Reference proteome</keyword>
<feature type="chain" id="PRO_0000155608" description="Probable metallophosphoesterase YsnB">
    <location>
        <begin position="1"/>
        <end position="169"/>
    </location>
</feature>
<feature type="binding site" evidence="1">
    <location>
        <position position="8"/>
    </location>
    <ligand>
        <name>Mn(2+)</name>
        <dbReference type="ChEBI" id="CHEBI:29035"/>
        <label>1</label>
    </ligand>
</feature>
<feature type="binding site" evidence="1">
    <location>
        <position position="10"/>
    </location>
    <ligand>
        <name>Mn(2+)</name>
        <dbReference type="ChEBI" id="CHEBI:29035"/>
        <label>1</label>
    </ligand>
</feature>
<feature type="binding site" evidence="1">
    <location>
        <position position="35"/>
    </location>
    <ligand>
        <name>Mn(2+)</name>
        <dbReference type="ChEBI" id="CHEBI:29035"/>
        <label>1</label>
    </ligand>
</feature>
<feature type="binding site" evidence="1">
    <location>
        <position position="35"/>
    </location>
    <ligand>
        <name>Mn(2+)</name>
        <dbReference type="ChEBI" id="CHEBI:29035"/>
        <label>2</label>
    </ligand>
</feature>
<feature type="binding site" evidence="1">
    <location>
        <position position="54"/>
    </location>
    <ligand>
        <name>Mn(2+)</name>
        <dbReference type="ChEBI" id="CHEBI:29035"/>
        <label>2</label>
    </ligand>
</feature>
<feature type="binding site" evidence="1">
    <location>
        <position position="78"/>
    </location>
    <ligand>
        <name>Mn(2+)</name>
        <dbReference type="ChEBI" id="CHEBI:29035"/>
        <label>2</label>
    </ligand>
</feature>
<feature type="binding site" evidence="1">
    <location>
        <position position="107"/>
    </location>
    <ligand>
        <name>Mn(2+)</name>
        <dbReference type="ChEBI" id="CHEBI:29035"/>
        <label>2</label>
    </ligand>
</feature>
<feature type="binding site" evidence="1">
    <location>
        <position position="109"/>
    </location>
    <ligand>
        <name>Mn(2+)</name>
        <dbReference type="ChEBI" id="CHEBI:29035"/>
        <label>1</label>
    </ligand>
</feature>
<protein>
    <recommendedName>
        <fullName evidence="2">Probable metallophosphoesterase YsnB</fullName>
        <ecNumber evidence="1">3.1.4.-</ecNumber>
    </recommendedName>
</protein>
<organism>
    <name type="scientific">Bacillus subtilis (strain 168)</name>
    <dbReference type="NCBI Taxonomy" id="224308"/>
    <lineage>
        <taxon>Bacteria</taxon>
        <taxon>Bacillati</taxon>
        <taxon>Bacillota</taxon>
        <taxon>Bacilli</taxon>
        <taxon>Bacillales</taxon>
        <taxon>Bacillaceae</taxon>
        <taxon>Bacillus</taxon>
    </lineage>
</organism>
<comment type="cofactor">
    <cofactor evidence="1">
        <name>Mn(2+)</name>
        <dbReference type="ChEBI" id="CHEBI:29035"/>
    </cofactor>
    <text evidence="1">Binds 2 manganese ions per subunit.</text>
</comment>
<comment type="similarity">
    <text evidence="2">Belongs to the metallophosphoesterase superfamily. YfcE family.</text>
</comment>
<comment type="sequence caution" evidence="2">
    <conflict type="erroneous initiation">
        <sequence resource="EMBL-CDS" id="CAA99556"/>
    </conflict>
    <text>Extended N-terminus.</text>
</comment>
<reference key="1">
    <citation type="journal article" date="1996" name="Microbiology">
        <title>The dnaB-pheA (256 degrees-240 degrees) region of the Bacillus subtilis chromosome containing genes responsible for stress responses, the utilization of plant cell walls and primary metabolism.</title>
        <authorList>
            <person name="Wipat A."/>
            <person name="Carter N."/>
            <person name="Brignell C.S."/>
            <person name="Guy J.B."/>
            <person name="Piper K."/>
            <person name="Sanders J."/>
            <person name="Emmerson P.T."/>
            <person name="Harwood C.R."/>
        </authorList>
    </citation>
    <scope>NUCLEOTIDE SEQUENCE [GENOMIC DNA]</scope>
    <source>
        <strain>168</strain>
    </source>
</reference>
<reference key="2">
    <citation type="journal article" date="1997" name="Nature">
        <title>The complete genome sequence of the Gram-positive bacterium Bacillus subtilis.</title>
        <authorList>
            <person name="Kunst F."/>
            <person name="Ogasawara N."/>
            <person name="Moszer I."/>
            <person name="Albertini A.M."/>
            <person name="Alloni G."/>
            <person name="Azevedo V."/>
            <person name="Bertero M.G."/>
            <person name="Bessieres P."/>
            <person name="Bolotin A."/>
            <person name="Borchert S."/>
            <person name="Borriss R."/>
            <person name="Boursier L."/>
            <person name="Brans A."/>
            <person name="Braun M."/>
            <person name="Brignell S.C."/>
            <person name="Bron S."/>
            <person name="Brouillet S."/>
            <person name="Bruschi C.V."/>
            <person name="Caldwell B."/>
            <person name="Capuano V."/>
            <person name="Carter N.M."/>
            <person name="Choi S.-K."/>
            <person name="Codani J.-J."/>
            <person name="Connerton I.F."/>
            <person name="Cummings N.J."/>
            <person name="Daniel R.A."/>
            <person name="Denizot F."/>
            <person name="Devine K.M."/>
            <person name="Duesterhoeft A."/>
            <person name="Ehrlich S.D."/>
            <person name="Emmerson P.T."/>
            <person name="Entian K.-D."/>
            <person name="Errington J."/>
            <person name="Fabret C."/>
            <person name="Ferrari E."/>
            <person name="Foulger D."/>
            <person name="Fritz C."/>
            <person name="Fujita M."/>
            <person name="Fujita Y."/>
            <person name="Fuma S."/>
            <person name="Galizzi A."/>
            <person name="Galleron N."/>
            <person name="Ghim S.-Y."/>
            <person name="Glaser P."/>
            <person name="Goffeau A."/>
            <person name="Golightly E.J."/>
            <person name="Grandi G."/>
            <person name="Guiseppi G."/>
            <person name="Guy B.J."/>
            <person name="Haga K."/>
            <person name="Haiech J."/>
            <person name="Harwood C.R."/>
            <person name="Henaut A."/>
            <person name="Hilbert H."/>
            <person name="Holsappel S."/>
            <person name="Hosono S."/>
            <person name="Hullo M.-F."/>
            <person name="Itaya M."/>
            <person name="Jones L.-M."/>
            <person name="Joris B."/>
            <person name="Karamata D."/>
            <person name="Kasahara Y."/>
            <person name="Klaerr-Blanchard M."/>
            <person name="Klein C."/>
            <person name="Kobayashi Y."/>
            <person name="Koetter P."/>
            <person name="Koningstein G."/>
            <person name="Krogh S."/>
            <person name="Kumano M."/>
            <person name="Kurita K."/>
            <person name="Lapidus A."/>
            <person name="Lardinois S."/>
            <person name="Lauber J."/>
            <person name="Lazarevic V."/>
            <person name="Lee S.-M."/>
            <person name="Levine A."/>
            <person name="Liu H."/>
            <person name="Masuda S."/>
            <person name="Mauel C."/>
            <person name="Medigue C."/>
            <person name="Medina N."/>
            <person name="Mellado R.P."/>
            <person name="Mizuno M."/>
            <person name="Moestl D."/>
            <person name="Nakai S."/>
            <person name="Noback M."/>
            <person name="Noone D."/>
            <person name="O'Reilly M."/>
            <person name="Ogawa K."/>
            <person name="Ogiwara A."/>
            <person name="Oudega B."/>
            <person name="Park S.-H."/>
            <person name="Parro V."/>
            <person name="Pohl T.M."/>
            <person name="Portetelle D."/>
            <person name="Porwollik S."/>
            <person name="Prescott A.M."/>
            <person name="Presecan E."/>
            <person name="Pujic P."/>
            <person name="Purnelle B."/>
            <person name="Rapoport G."/>
            <person name="Rey M."/>
            <person name="Reynolds S."/>
            <person name="Rieger M."/>
            <person name="Rivolta C."/>
            <person name="Rocha E."/>
            <person name="Roche B."/>
            <person name="Rose M."/>
            <person name="Sadaie Y."/>
            <person name="Sato T."/>
            <person name="Scanlan E."/>
            <person name="Schleich S."/>
            <person name="Schroeter R."/>
            <person name="Scoffone F."/>
            <person name="Sekiguchi J."/>
            <person name="Sekowska A."/>
            <person name="Seror S.J."/>
            <person name="Serror P."/>
            <person name="Shin B.-S."/>
            <person name="Soldo B."/>
            <person name="Sorokin A."/>
            <person name="Tacconi E."/>
            <person name="Takagi T."/>
            <person name="Takahashi H."/>
            <person name="Takemaru K."/>
            <person name="Takeuchi M."/>
            <person name="Tamakoshi A."/>
            <person name="Tanaka T."/>
            <person name="Terpstra P."/>
            <person name="Tognoni A."/>
            <person name="Tosato V."/>
            <person name="Uchiyama S."/>
            <person name="Vandenbol M."/>
            <person name="Vannier F."/>
            <person name="Vassarotti A."/>
            <person name="Viari A."/>
            <person name="Wambutt R."/>
            <person name="Wedler E."/>
            <person name="Wedler H."/>
            <person name="Weitzenegger T."/>
            <person name="Winters P."/>
            <person name="Wipat A."/>
            <person name="Yamamoto H."/>
            <person name="Yamane K."/>
            <person name="Yasumoto K."/>
            <person name="Yata K."/>
            <person name="Yoshida K."/>
            <person name="Yoshikawa H.-F."/>
            <person name="Zumstein E."/>
            <person name="Yoshikawa H."/>
            <person name="Danchin A."/>
        </authorList>
    </citation>
    <scope>NUCLEOTIDE SEQUENCE [LARGE SCALE GENOMIC DNA]</scope>
    <source>
        <strain>168</strain>
    </source>
</reference>
<evidence type="ECO:0000250" key="1">
    <source>
        <dbReference type="UniProtKB" id="P67095"/>
    </source>
</evidence>
<evidence type="ECO:0000305" key="2"/>